<keyword id="KW-0240">DNA-directed RNA polymerase</keyword>
<keyword id="KW-0548">Nucleotidyltransferase</keyword>
<keyword id="KW-0804">Transcription</keyword>
<keyword id="KW-0808">Transferase</keyword>
<name>RPOZ_NITEC</name>
<feature type="chain" id="PRO_1000005965" description="DNA-directed RNA polymerase subunit omega">
    <location>
        <begin position="1"/>
        <end position="67"/>
    </location>
</feature>
<comment type="function">
    <text evidence="1">Promotes RNA polymerase assembly. Latches the N- and C-terminal regions of the beta' subunit thereby facilitating its interaction with the beta and alpha subunits.</text>
</comment>
<comment type="catalytic activity">
    <reaction evidence="1">
        <text>RNA(n) + a ribonucleoside 5'-triphosphate = RNA(n+1) + diphosphate</text>
        <dbReference type="Rhea" id="RHEA:21248"/>
        <dbReference type="Rhea" id="RHEA-COMP:14527"/>
        <dbReference type="Rhea" id="RHEA-COMP:17342"/>
        <dbReference type="ChEBI" id="CHEBI:33019"/>
        <dbReference type="ChEBI" id="CHEBI:61557"/>
        <dbReference type="ChEBI" id="CHEBI:140395"/>
        <dbReference type="EC" id="2.7.7.6"/>
    </reaction>
</comment>
<comment type="subunit">
    <text evidence="1">The RNAP catalytic core consists of 2 alpha, 1 beta, 1 beta' and 1 omega subunit. When a sigma factor is associated with the core the holoenzyme is formed, which can initiate transcription.</text>
</comment>
<comment type="similarity">
    <text evidence="1">Belongs to the RNA polymerase subunit omega family.</text>
</comment>
<accession>Q0AD35</accession>
<protein>
    <recommendedName>
        <fullName evidence="1">DNA-directed RNA polymerase subunit omega</fullName>
        <shortName evidence="1">RNAP omega subunit</shortName>
        <ecNumber evidence="1">2.7.7.6</ecNumber>
    </recommendedName>
    <alternativeName>
        <fullName evidence="1">RNA polymerase omega subunit</fullName>
    </alternativeName>
    <alternativeName>
        <fullName evidence="1">Transcriptase subunit omega</fullName>
    </alternativeName>
</protein>
<evidence type="ECO:0000255" key="1">
    <source>
        <dbReference type="HAMAP-Rule" id="MF_00366"/>
    </source>
</evidence>
<reference key="1">
    <citation type="journal article" date="2007" name="Environ. Microbiol.">
        <title>Whole-genome analysis of the ammonia-oxidizing bacterium, Nitrosomonas eutropha C91: implications for niche adaptation.</title>
        <authorList>
            <person name="Stein L.Y."/>
            <person name="Arp D.J."/>
            <person name="Berube P.M."/>
            <person name="Chain P.S."/>
            <person name="Hauser L."/>
            <person name="Jetten M.S."/>
            <person name="Klotz M.G."/>
            <person name="Larimer F.W."/>
            <person name="Norton J.M."/>
            <person name="Op den Camp H.J.M."/>
            <person name="Shin M."/>
            <person name="Wei X."/>
        </authorList>
    </citation>
    <scope>NUCLEOTIDE SEQUENCE [LARGE SCALE GENOMIC DNA]</scope>
    <source>
        <strain>DSM 101675 / C91 / Nm57</strain>
    </source>
</reference>
<dbReference type="EC" id="2.7.7.6" evidence="1"/>
<dbReference type="EMBL" id="CP000450">
    <property type="protein sequence ID" value="ABI58885.1"/>
    <property type="molecule type" value="Genomic_DNA"/>
</dbReference>
<dbReference type="RefSeq" id="WP_011633726.1">
    <property type="nucleotide sequence ID" value="NC_008344.1"/>
</dbReference>
<dbReference type="SMR" id="Q0AD35"/>
<dbReference type="STRING" id="335283.Neut_0613"/>
<dbReference type="KEGG" id="net:Neut_0613"/>
<dbReference type="eggNOG" id="COG1758">
    <property type="taxonomic scope" value="Bacteria"/>
</dbReference>
<dbReference type="HOGENOM" id="CLU_125406_5_2_4"/>
<dbReference type="OrthoDB" id="9796300at2"/>
<dbReference type="Proteomes" id="UP000001966">
    <property type="component" value="Chromosome"/>
</dbReference>
<dbReference type="GO" id="GO:0000428">
    <property type="term" value="C:DNA-directed RNA polymerase complex"/>
    <property type="evidence" value="ECO:0007669"/>
    <property type="project" value="UniProtKB-KW"/>
</dbReference>
<dbReference type="GO" id="GO:0003677">
    <property type="term" value="F:DNA binding"/>
    <property type="evidence" value="ECO:0007669"/>
    <property type="project" value="UniProtKB-UniRule"/>
</dbReference>
<dbReference type="GO" id="GO:0003899">
    <property type="term" value="F:DNA-directed RNA polymerase activity"/>
    <property type="evidence" value="ECO:0007669"/>
    <property type="project" value="UniProtKB-UniRule"/>
</dbReference>
<dbReference type="GO" id="GO:0006351">
    <property type="term" value="P:DNA-templated transcription"/>
    <property type="evidence" value="ECO:0007669"/>
    <property type="project" value="UniProtKB-UniRule"/>
</dbReference>
<dbReference type="Gene3D" id="3.90.940.10">
    <property type="match status" value="1"/>
</dbReference>
<dbReference type="HAMAP" id="MF_00366">
    <property type="entry name" value="RNApol_bact_RpoZ"/>
    <property type="match status" value="1"/>
</dbReference>
<dbReference type="InterPro" id="IPR003716">
    <property type="entry name" value="DNA-dir_RNA_pol_omega"/>
</dbReference>
<dbReference type="InterPro" id="IPR006110">
    <property type="entry name" value="Pol_omega/Rpo6/RPB6"/>
</dbReference>
<dbReference type="InterPro" id="IPR036161">
    <property type="entry name" value="RPB6/omega-like_sf"/>
</dbReference>
<dbReference type="NCBIfam" id="TIGR00690">
    <property type="entry name" value="rpoZ"/>
    <property type="match status" value="1"/>
</dbReference>
<dbReference type="PANTHER" id="PTHR34476">
    <property type="entry name" value="DNA-DIRECTED RNA POLYMERASE SUBUNIT OMEGA"/>
    <property type="match status" value="1"/>
</dbReference>
<dbReference type="PANTHER" id="PTHR34476:SF1">
    <property type="entry name" value="DNA-DIRECTED RNA POLYMERASE SUBUNIT OMEGA"/>
    <property type="match status" value="1"/>
</dbReference>
<dbReference type="Pfam" id="PF01192">
    <property type="entry name" value="RNA_pol_Rpb6"/>
    <property type="match status" value="1"/>
</dbReference>
<dbReference type="SMART" id="SM01409">
    <property type="entry name" value="RNA_pol_Rpb6"/>
    <property type="match status" value="1"/>
</dbReference>
<dbReference type="SUPFAM" id="SSF63562">
    <property type="entry name" value="RPB6/omega subunit-like"/>
    <property type="match status" value="1"/>
</dbReference>
<organism>
    <name type="scientific">Nitrosomonas eutropha (strain DSM 101675 / C91 / Nm57)</name>
    <dbReference type="NCBI Taxonomy" id="335283"/>
    <lineage>
        <taxon>Bacteria</taxon>
        <taxon>Pseudomonadati</taxon>
        <taxon>Pseudomonadota</taxon>
        <taxon>Betaproteobacteria</taxon>
        <taxon>Nitrosomonadales</taxon>
        <taxon>Nitrosomonadaceae</taxon>
        <taxon>Nitrosomonas</taxon>
    </lineage>
</organism>
<proteinExistence type="inferred from homology"/>
<sequence length="67" mass="7540">MARITVEDCLKVIPNRFNMTLAATVRARQISVGSTPMIDAGRDKPIVIALRELAQKKYNENILNTIR</sequence>
<gene>
    <name evidence="1" type="primary">rpoZ</name>
    <name type="ordered locus">Neut_0613</name>
</gene>